<evidence type="ECO:0000250" key="1">
    <source>
        <dbReference type="UniProtKB" id="P0A3H0"/>
    </source>
</evidence>
<evidence type="ECO:0000269" key="2">
    <source>
    </source>
</evidence>
<evidence type="ECO:0000269" key="3">
    <source>
    </source>
</evidence>
<evidence type="ECO:0000269" key="4">
    <source>
    </source>
</evidence>
<evidence type="ECO:0000269" key="5">
    <source>
    </source>
</evidence>
<evidence type="ECO:0000269" key="6">
    <source>
    </source>
</evidence>
<evidence type="ECO:0000269" key="7">
    <source>
    </source>
</evidence>
<evidence type="ECO:0000269" key="8">
    <source>
    </source>
</evidence>
<evidence type="ECO:0000303" key="9">
    <source>
    </source>
</evidence>
<evidence type="ECO:0000303" key="10">
    <source>
    </source>
</evidence>
<evidence type="ECO:0000303" key="11">
    <source>
    </source>
</evidence>
<evidence type="ECO:0000303" key="12">
    <source>
    </source>
</evidence>
<evidence type="ECO:0000303" key="13">
    <source>
    </source>
</evidence>
<evidence type="ECO:0000303" key="14">
    <source>
    </source>
</evidence>
<evidence type="ECO:0000305" key="15"/>
<evidence type="ECO:0000312" key="16">
    <source>
        <dbReference type="EMBL" id="AAA22535.1"/>
    </source>
</evidence>
<evidence type="ECO:0000312" key="17">
    <source>
        <dbReference type="EMBL" id="AAA22536.1"/>
    </source>
</evidence>
<evidence type="ECO:0000312" key="18">
    <source>
        <dbReference type="EMBL" id="AAB59030.1"/>
    </source>
</evidence>
<evidence type="ECO:0000312" key="19">
    <source>
        <dbReference type="EMBL" id="CAA36669.1"/>
    </source>
</evidence>
<evidence type="ECO:0000312" key="20">
    <source>
        <dbReference type="EMBL" id="CAA47064.1"/>
    </source>
</evidence>
<evidence type="ECO:0000312" key="21">
    <source>
        <dbReference type="EMBL" id="CAB14195.1"/>
    </source>
</evidence>
<proteinExistence type="evidence at protein level"/>
<name>DBH1_BACSU</name>
<organism>
    <name type="scientific">Bacillus subtilis (strain 168)</name>
    <dbReference type="NCBI Taxonomy" id="224308"/>
    <lineage>
        <taxon>Bacteria</taxon>
        <taxon>Bacillati</taxon>
        <taxon>Bacillota</taxon>
        <taxon>Bacilli</taxon>
        <taxon>Bacillales</taxon>
        <taxon>Bacillaceae</taxon>
        <taxon>Bacillus</taxon>
    </lineage>
</organism>
<feature type="chain" id="PRO_0000104913" description="DNA-binding protein HU 1">
    <location>
        <begin position="1"/>
        <end position="92"/>
    </location>
</feature>
<feature type="modified residue" description="Phosphothreonine" evidence="3">
    <location>
        <position position="4"/>
    </location>
</feature>
<feature type="sequence variant" description="In strain: Globigii." evidence="4 7">
    <original>D</original>
    <variation>K</variation>
    <location>
        <position position="40"/>
    </location>
</feature>
<feature type="mutagenesis site" description="No change in DNA-binding." evidence="2">
    <original>F</original>
    <variation>W</variation>
    <location>
        <position position="47"/>
    </location>
</feature>
<feature type="mutagenesis site" description="Weakens the interaction with Bacillus phage SP01 Gp46." evidence="6">
    <original>I</original>
    <variation>A</variation>
    <location>
        <position position="71"/>
    </location>
</feature>
<feature type="mutagenesis site" description="Disrupts interaction with Bacillus phage SP01 Gp46; when associated with Q-83 and Q-86." evidence="6">
    <original>K</original>
    <variation>Q</variation>
    <location>
        <position position="80"/>
    </location>
</feature>
<feature type="mutagenesis site" description="Disrupts interaction with Bacillus phage SP01 Gp46; when associated with Q-80 and Q-86." evidence="6">
    <original>K</original>
    <variation>Q</variation>
    <location>
        <position position="83"/>
    </location>
</feature>
<feature type="mutagenesis site" description="Disrupts interaction with Bacillus phage SP01 Gp46; when associated with Q-80 and Q-83." evidence="6">
    <original>K</original>
    <variation>Q</variation>
    <location>
        <position position="86"/>
    </location>
</feature>
<comment type="function">
    <text evidence="5 7 8">Histone-like DNA-binding protein which introduces negative supercoils in relaxed plasmid DNA in the presence of topoisomerase I. There are at least 20,000 monomers/cell (PubMed:8439548). Capable of wrapping DNA to stabilize it, and thus to prevent its denaturation under extreme environmental conditions. Binds evenly across chromosome, does not display a preference for AT content (PubMed:21085634). Binds ss- and dsDNA in a sequence non-specific manner; 8 nucleotides are sufficient to bind protein (PubMed:3595600).</text>
</comment>
<comment type="subunit">
    <text evidence="1">Homodimer.</text>
</comment>
<comment type="subunit">
    <text evidence="6">(Microbial infection) Interacts with Bacillus phage SP01 Gp46; the interaction replaces dsDNA from the hbs-DNA complex.</text>
</comment>
<comment type="subcellular location">
    <subcellularLocation>
        <location evidence="5 8">Cytoplasm</location>
        <location evidence="5 8">Nucleoid</location>
    </subcellularLocation>
    <text evidence="5">Evenly distributed along the nucleoid (PubMed:21085634).</text>
</comment>
<comment type="induction">
    <text evidence="4">Constitutively transcribed with 2 transcripts of 0.54 and 0.38 kb.</text>
</comment>
<comment type="disruption phenotype">
    <text evidence="4">Essential, it cannot be deleted; upon depletion cell growth slows.</text>
</comment>
<comment type="similarity">
    <text evidence="15">Belongs to the bacterial histone-like protein family.</text>
</comment>
<protein>
    <recommendedName>
        <fullName>DNA-binding protein HU 1</fullName>
    </recommendedName>
    <alternativeName>
        <fullName>DNA-binding protein II</fullName>
    </alternativeName>
    <alternativeName>
        <fullName evidence="12">HB</fullName>
    </alternativeName>
    <alternativeName>
        <fullName evidence="9">HBsu</fullName>
    </alternativeName>
    <alternativeName>
        <fullName evidence="13">HPB9</fullName>
    </alternativeName>
</protein>
<keyword id="KW-0963">Cytoplasm</keyword>
<keyword id="KW-0903">Direct protein sequencing</keyword>
<keyword id="KW-0226">DNA condensation</keyword>
<keyword id="KW-0238">DNA-binding</keyword>
<keyword id="KW-0597">Phosphoprotein</keyword>
<keyword id="KW-1185">Reference proteome</keyword>
<gene>
    <name evidence="11 14" type="primary">hbs</name>
    <name type="synonym">dbpA</name>
    <name evidence="9" type="synonym">hbsU</name>
    <name evidence="10" type="synonym">hubgl</name>
    <name type="synonym">hupA</name>
    <name type="ordered locus">BSU22790</name>
</gene>
<sequence length="92" mass="9884">MNKTELINAVAEASELSKKDATKAVDSVFDTILDALKNGDKIQLIGFGNFEVRERSARKGRNPQTGEEIEIPASKVPAFKPGKALKDAVAGK</sequence>
<accession>P08821</accession>
<dbReference type="EMBL" id="X66448">
    <property type="protein sequence ID" value="CAA47064.1"/>
    <property type="molecule type" value="Genomic_DNA"/>
</dbReference>
<dbReference type="EMBL" id="X52418">
    <property type="protein sequence ID" value="CAA36669.1"/>
    <property type="molecule type" value="Genomic_DNA"/>
</dbReference>
<dbReference type="EMBL" id="M73504">
    <property type="protein sequence ID" value="AAA22536.1"/>
    <property type="molecule type" value="Genomic_DNA"/>
</dbReference>
<dbReference type="EMBL" id="M73503">
    <property type="protein sequence ID" value="AAA22535.1"/>
    <property type="molecule type" value="Genomic_DNA"/>
</dbReference>
<dbReference type="EMBL" id="M80926">
    <property type="protein sequence ID" value="AAB59030.1"/>
    <property type="molecule type" value="Genomic_DNA"/>
</dbReference>
<dbReference type="EMBL" id="AL009126">
    <property type="protein sequence ID" value="CAB14195.1"/>
    <property type="molecule type" value="Genomic_DNA"/>
</dbReference>
<dbReference type="PIR" id="JC1208">
    <property type="entry name" value="JC1208"/>
</dbReference>
<dbReference type="PIR" id="S00015">
    <property type="entry name" value="S00015"/>
</dbReference>
<dbReference type="RefSeq" id="NP_390160.1">
    <property type="nucleotide sequence ID" value="NC_000964.3"/>
</dbReference>
<dbReference type="RefSeq" id="WP_003153447.1">
    <property type="nucleotide sequence ID" value="NZ_OZ025638.1"/>
</dbReference>
<dbReference type="SMR" id="P08821"/>
<dbReference type="FunCoup" id="P08821">
    <property type="interactions" value="401"/>
</dbReference>
<dbReference type="IntAct" id="P08821">
    <property type="interactions" value="1"/>
</dbReference>
<dbReference type="MINT" id="P08821"/>
<dbReference type="STRING" id="224308.BSU22790"/>
<dbReference type="iPTMnet" id="P08821"/>
<dbReference type="jPOST" id="P08821"/>
<dbReference type="PaxDb" id="224308-BSU22790"/>
<dbReference type="EnsemblBacteria" id="CAB14195">
    <property type="protein sequence ID" value="CAB14195"/>
    <property type="gene ID" value="BSU_22790"/>
</dbReference>
<dbReference type="GeneID" id="93081230"/>
<dbReference type="GeneID" id="938995"/>
<dbReference type="KEGG" id="bsu:BSU22790"/>
<dbReference type="PATRIC" id="fig|224308.179.peg.2484"/>
<dbReference type="eggNOG" id="COG0776">
    <property type="taxonomic scope" value="Bacteria"/>
</dbReference>
<dbReference type="InParanoid" id="P08821"/>
<dbReference type="OrthoDB" id="9799835at2"/>
<dbReference type="PhylomeDB" id="P08821"/>
<dbReference type="BioCyc" id="BSUB:BSU22790-MONOMER"/>
<dbReference type="PRO" id="PR:P08821"/>
<dbReference type="Proteomes" id="UP000001570">
    <property type="component" value="Chromosome"/>
</dbReference>
<dbReference type="GO" id="GO:0005829">
    <property type="term" value="C:cytosol"/>
    <property type="evidence" value="ECO:0000318"/>
    <property type="project" value="GO_Central"/>
</dbReference>
<dbReference type="GO" id="GO:0009295">
    <property type="term" value="C:nucleoid"/>
    <property type="evidence" value="ECO:0007669"/>
    <property type="project" value="UniProtKB-SubCell"/>
</dbReference>
<dbReference type="GO" id="GO:0003677">
    <property type="term" value="F:DNA binding"/>
    <property type="evidence" value="ECO:0000318"/>
    <property type="project" value="GO_Central"/>
</dbReference>
<dbReference type="GO" id="GO:0030527">
    <property type="term" value="F:structural constituent of chromatin"/>
    <property type="evidence" value="ECO:0007669"/>
    <property type="project" value="InterPro"/>
</dbReference>
<dbReference type="GO" id="GO:0030261">
    <property type="term" value="P:chromosome condensation"/>
    <property type="evidence" value="ECO:0007669"/>
    <property type="project" value="UniProtKB-KW"/>
</dbReference>
<dbReference type="CDD" id="cd13831">
    <property type="entry name" value="HU"/>
    <property type="match status" value="1"/>
</dbReference>
<dbReference type="FunFam" id="4.10.520.10:FF:000001">
    <property type="entry name" value="DNA-binding protein HU"/>
    <property type="match status" value="1"/>
</dbReference>
<dbReference type="Gene3D" id="4.10.520.10">
    <property type="entry name" value="IHF-like DNA-binding proteins"/>
    <property type="match status" value="1"/>
</dbReference>
<dbReference type="InterPro" id="IPR000119">
    <property type="entry name" value="Hist_DNA-bd"/>
</dbReference>
<dbReference type="InterPro" id="IPR020816">
    <property type="entry name" value="Histone-like_DNA-bd_CS"/>
</dbReference>
<dbReference type="InterPro" id="IPR010992">
    <property type="entry name" value="IHF-like_DNA-bd_dom_sf"/>
</dbReference>
<dbReference type="PANTHER" id="PTHR33175">
    <property type="entry name" value="DNA-BINDING PROTEIN HU"/>
    <property type="match status" value="1"/>
</dbReference>
<dbReference type="PANTHER" id="PTHR33175:SF3">
    <property type="entry name" value="DNA-BINDING PROTEIN HU-BETA"/>
    <property type="match status" value="1"/>
</dbReference>
<dbReference type="Pfam" id="PF00216">
    <property type="entry name" value="Bac_DNA_binding"/>
    <property type="match status" value="1"/>
</dbReference>
<dbReference type="PRINTS" id="PR01727">
    <property type="entry name" value="DNABINDINGHU"/>
</dbReference>
<dbReference type="SMART" id="SM00411">
    <property type="entry name" value="BHL"/>
    <property type="match status" value="1"/>
</dbReference>
<dbReference type="SUPFAM" id="SSF47729">
    <property type="entry name" value="IHF-like DNA-binding proteins"/>
    <property type="match status" value="1"/>
</dbReference>
<dbReference type="PROSITE" id="PS00045">
    <property type="entry name" value="HISTONE_LIKE"/>
    <property type="match status" value="1"/>
</dbReference>
<reference key="1">
    <citation type="journal article" date="1987" name="Eur. J. Biochem.">
        <title>DNA-binding properties and primary structure of HB protein from Bacillus globigii.</title>
        <authorList>
            <person name="Imber R."/>
            <person name="Kimura M."/>
            <person name="Groch N."/>
            <person name="Heinemann U."/>
        </authorList>
    </citation>
    <scope>PROTEIN SEQUENCE</scope>
    <scope>DNA-BINDING</scope>
    <source>
        <strain>Globigii</strain>
    </source>
</reference>
<reference evidence="20" key="2">
    <citation type="journal article" date="1992" name="Eur. J. Biochem.">
        <title>Determination of DNA-binding parameters for the Bacillus subtilis histone-like HBsu protein through introduction of fluorophores by site-directed mutagenesis of a synthetic gene.</title>
        <authorList>
            <person name="Groch N."/>
            <person name="Schindelin H."/>
            <person name="Schollz A.S."/>
            <person name="Hahn U."/>
            <person name="Heinemann U."/>
        </authorList>
    </citation>
    <scope>NUCLEOTIDE SEQUENCE [GENOMIC DNA]</scope>
    <scope>DNA-BINDING</scope>
    <scope>MUTAGENESIS OF PHE-47</scope>
</reference>
<reference evidence="18 19" key="3">
    <citation type="journal article" date="1991" name="J. Bacteriol.">
        <title>Molecular cloning, nucleotide sequence, and characterization of the Bacillus subtilis gene encoding the DNA-binding protein HBsu.</title>
        <authorList>
            <person name="Micka B."/>
            <person name="Groch N."/>
            <person name="Heinemann U."/>
            <person name="Marahiel M.A."/>
        </authorList>
    </citation>
    <scope>NUCLEOTIDE SEQUENCE [GENOMIC DNA]</scope>
    <scope>INDUCTION</scope>
    <scope>DISRUPTION PHENOTYPE</scope>
    <source>
        <strain>168 / JH642</strain>
    </source>
</reference>
<reference evidence="16 17" key="4">
    <citation type="journal article" date="1992" name="Gene">
        <title>The DNA-binding protein HU from mesophilic and thermophilic bacilli: gene cloning, overproduction and purification.</title>
        <authorList>
            <person name="Padas P.M."/>
            <person name="Wilson K.S."/>
            <person name="Vorgias C.E."/>
        </authorList>
    </citation>
    <scope>NUCLEOTIDE SEQUENCE [GENOMIC DNA]</scope>
    <scope>DNA-BINDING</scope>
    <source>
        <strain>168</strain>
        <strain>Globigii</strain>
    </source>
</reference>
<reference evidence="21" key="5">
    <citation type="journal article" date="1997" name="Nature">
        <title>The complete genome sequence of the Gram-positive bacterium Bacillus subtilis.</title>
        <authorList>
            <person name="Kunst F."/>
            <person name="Ogasawara N."/>
            <person name="Moszer I."/>
            <person name="Albertini A.M."/>
            <person name="Alloni G."/>
            <person name="Azevedo V."/>
            <person name="Bertero M.G."/>
            <person name="Bessieres P."/>
            <person name="Bolotin A."/>
            <person name="Borchert S."/>
            <person name="Borriss R."/>
            <person name="Boursier L."/>
            <person name="Brans A."/>
            <person name="Braun M."/>
            <person name="Brignell S.C."/>
            <person name="Bron S."/>
            <person name="Brouillet S."/>
            <person name="Bruschi C.V."/>
            <person name="Caldwell B."/>
            <person name="Capuano V."/>
            <person name="Carter N.M."/>
            <person name="Choi S.-K."/>
            <person name="Codani J.-J."/>
            <person name="Connerton I.F."/>
            <person name="Cummings N.J."/>
            <person name="Daniel R.A."/>
            <person name="Denizot F."/>
            <person name="Devine K.M."/>
            <person name="Duesterhoeft A."/>
            <person name="Ehrlich S.D."/>
            <person name="Emmerson P.T."/>
            <person name="Entian K.-D."/>
            <person name="Errington J."/>
            <person name="Fabret C."/>
            <person name="Ferrari E."/>
            <person name="Foulger D."/>
            <person name="Fritz C."/>
            <person name="Fujita M."/>
            <person name="Fujita Y."/>
            <person name="Fuma S."/>
            <person name="Galizzi A."/>
            <person name="Galleron N."/>
            <person name="Ghim S.-Y."/>
            <person name="Glaser P."/>
            <person name="Goffeau A."/>
            <person name="Golightly E.J."/>
            <person name="Grandi G."/>
            <person name="Guiseppi G."/>
            <person name="Guy B.J."/>
            <person name="Haga K."/>
            <person name="Haiech J."/>
            <person name="Harwood C.R."/>
            <person name="Henaut A."/>
            <person name="Hilbert H."/>
            <person name="Holsappel S."/>
            <person name="Hosono S."/>
            <person name="Hullo M.-F."/>
            <person name="Itaya M."/>
            <person name="Jones L.-M."/>
            <person name="Joris B."/>
            <person name="Karamata D."/>
            <person name="Kasahara Y."/>
            <person name="Klaerr-Blanchard M."/>
            <person name="Klein C."/>
            <person name="Kobayashi Y."/>
            <person name="Koetter P."/>
            <person name="Koningstein G."/>
            <person name="Krogh S."/>
            <person name="Kumano M."/>
            <person name="Kurita K."/>
            <person name="Lapidus A."/>
            <person name="Lardinois S."/>
            <person name="Lauber J."/>
            <person name="Lazarevic V."/>
            <person name="Lee S.-M."/>
            <person name="Levine A."/>
            <person name="Liu H."/>
            <person name="Masuda S."/>
            <person name="Mauel C."/>
            <person name="Medigue C."/>
            <person name="Medina N."/>
            <person name="Mellado R.P."/>
            <person name="Mizuno M."/>
            <person name="Moestl D."/>
            <person name="Nakai S."/>
            <person name="Noback M."/>
            <person name="Noone D."/>
            <person name="O'Reilly M."/>
            <person name="Ogawa K."/>
            <person name="Ogiwara A."/>
            <person name="Oudega B."/>
            <person name="Park S.-H."/>
            <person name="Parro V."/>
            <person name="Pohl T.M."/>
            <person name="Portetelle D."/>
            <person name="Porwollik S."/>
            <person name="Prescott A.M."/>
            <person name="Presecan E."/>
            <person name="Pujic P."/>
            <person name="Purnelle B."/>
            <person name="Rapoport G."/>
            <person name="Rey M."/>
            <person name="Reynolds S."/>
            <person name="Rieger M."/>
            <person name="Rivolta C."/>
            <person name="Rocha E."/>
            <person name="Roche B."/>
            <person name="Rose M."/>
            <person name="Sadaie Y."/>
            <person name="Sato T."/>
            <person name="Scanlan E."/>
            <person name="Schleich S."/>
            <person name="Schroeter R."/>
            <person name="Scoffone F."/>
            <person name="Sekiguchi J."/>
            <person name="Sekowska A."/>
            <person name="Seror S.J."/>
            <person name="Serror P."/>
            <person name="Shin B.-S."/>
            <person name="Soldo B."/>
            <person name="Sorokin A."/>
            <person name="Tacconi E."/>
            <person name="Takagi T."/>
            <person name="Takahashi H."/>
            <person name="Takemaru K."/>
            <person name="Takeuchi M."/>
            <person name="Tamakoshi A."/>
            <person name="Tanaka T."/>
            <person name="Terpstra P."/>
            <person name="Tognoni A."/>
            <person name="Tosato V."/>
            <person name="Uchiyama S."/>
            <person name="Vandenbol M."/>
            <person name="Vannier F."/>
            <person name="Vassarotti A."/>
            <person name="Viari A."/>
            <person name="Wambutt R."/>
            <person name="Wedler E."/>
            <person name="Wedler H."/>
            <person name="Weitzenegger T."/>
            <person name="Winters P."/>
            <person name="Wipat A."/>
            <person name="Yamamoto H."/>
            <person name="Yamane K."/>
            <person name="Yasumoto K."/>
            <person name="Yata K."/>
            <person name="Yoshida K."/>
            <person name="Yoshikawa H.-F."/>
            <person name="Zumstein E."/>
            <person name="Yoshikawa H."/>
            <person name="Danchin A."/>
        </authorList>
    </citation>
    <scope>NUCLEOTIDE SEQUENCE [LARGE SCALE GENOMIC DNA]</scope>
    <source>
        <strain>168</strain>
    </source>
</reference>
<reference key="6">
    <citation type="journal article" date="1993" name="Biochim. Biophys. Acta">
        <title>Purification and characterization of the HU-like protein HPB9 from the Bacillus subtilis nucleoid.</title>
        <authorList>
            <person name="Le Hegarat F."/>
            <person name="Salti-Montesanto V."/>
            <person name="Hauck Y."/>
            <person name="Hirschbein L."/>
        </authorList>
    </citation>
    <scope>PROTEIN SEQUENCE OF 1-11</scope>
    <scope>FUNCTION</scope>
    <scope>SUBCELLULAR LOCATION</scope>
    <scope>PROTEIN ABUNDANCE</scope>
    <source>
        <strain>168</strain>
    </source>
</reference>
<reference key="7">
    <citation type="journal article" date="2022" name="Proc. Natl. Acad. Sci. U.S.A.">
        <title>Bacteriophage protein Gp46 is a cross-species inhibitor of nucleoid-associated HU proteins.</title>
        <authorList>
            <person name="Zhang P."/>
            <person name="Zhao X."/>
            <person name="Wang Y."/>
            <person name="Du K."/>
            <person name="Wang Z."/>
            <person name="Yu J."/>
            <person name="Chang G."/>
            <person name="Matthews S."/>
            <person name="Wang H."/>
            <person name="Liu B."/>
        </authorList>
    </citation>
    <scope>PROTEIN SEQUENCE OF 42-53</scope>
    <scope>INTERACTION WITH BACILLUS PHAGE SP01 GP46</scope>
    <scope>MUTAGENESIS OF ILE-71; LYS-80; LYS-83 AND LYS-86</scope>
</reference>
<reference key="8">
    <citation type="journal article" date="2007" name="Mol. Cell. Proteomics">
        <title>The serine/threonine/tyrosine phosphoproteome of the model bacterium Bacillus subtilis.</title>
        <authorList>
            <person name="Macek B."/>
            <person name="Mijakovic I."/>
            <person name="Olsen J.V."/>
            <person name="Gnad F."/>
            <person name="Kumar C."/>
            <person name="Jensen P.R."/>
            <person name="Mann M."/>
        </authorList>
    </citation>
    <scope>PHOSPHORYLATION [LARGE SCALE ANALYSIS] AT THR-4</scope>
    <scope>IDENTIFICATION BY MASS SPECTROMETRY</scope>
    <source>
        <strain>168</strain>
    </source>
</reference>
<reference key="9">
    <citation type="journal article" date="2010" name="PLoS Genet.">
        <title>The transcriptional regulator Rok binds A+T-rich DNA and is involved in repression of a mobile genetic element in Bacillus subtilis.</title>
        <authorList>
            <person name="Smits W.K."/>
            <person name="Grossman A.D."/>
        </authorList>
    </citation>
    <scope>FUNCTION</scope>
    <scope>SUBCELLULAR LOCATION</scope>
    <scope>DNA-BINDING</scope>
    <source>
        <strain>168</strain>
    </source>
</reference>